<protein>
    <recommendedName>
        <fullName evidence="1">Transcription elongation factor GreA</fullName>
    </recommendedName>
    <alternativeName>
        <fullName evidence="1">Transcript cleavage factor GreA</fullName>
    </alternativeName>
</protein>
<organism>
    <name type="scientific">Campylobacter jejuni (strain RM1221)</name>
    <dbReference type="NCBI Taxonomy" id="195099"/>
    <lineage>
        <taxon>Bacteria</taxon>
        <taxon>Pseudomonadati</taxon>
        <taxon>Campylobacterota</taxon>
        <taxon>Epsilonproteobacteria</taxon>
        <taxon>Campylobacterales</taxon>
        <taxon>Campylobacteraceae</taxon>
        <taxon>Campylobacter</taxon>
    </lineage>
</organism>
<proteinExistence type="inferred from homology"/>
<evidence type="ECO:0000255" key="1">
    <source>
        <dbReference type="HAMAP-Rule" id="MF_00105"/>
    </source>
</evidence>
<sequence length="161" mass="18010">MQKEPMSQFGYDKLAAELKDLKDNQRPAVVIEIDTARSHGDLKENAEYHAAREKQALIESRIAELSDLLARAQVIDPSSYEHDSVKFGSSVVIMDLDTEKESKYTLVGICEGNLDKGYISIASPIAKAMLGKKEGDDFKVRLPKGESEFEILSINYEPLKF</sequence>
<dbReference type="EMBL" id="CP000025">
    <property type="protein sequence ID" value="AAW34925.1"/>
    <property type="molecule type" value="Genomic_DNA"/>
</dbReference>
<dbReference type="RefSeq" id="WP_002858660.1">
    <property type="nucleotide sequence ID" value="NC_003912.7"/>
</dbReference>
<dbReference type="SMR" id="Q5HWI0"/>
<dbReference type="KEGG" id="cjr:CJE0335"/>
<dbReference type="HOGENOM" id="CLU_101379_2_0_7"/>
<dbReference type="GO" id="GO:0003677">
    <property type="term" value="F:DNA binding"/>
    <property type="evidence" value="ECO:0007669"/>
    <property type="project" value="UniProtKB-UniRule"/>
</dbReference>
<dbReference type="GO" id="GO:0070063">
    <property type="term" value="F:RNA polymerase binding"/>
    <property type="evidence" value="ECO:0007669"/>
    <property type="project" value="InterPro"/>
</dbReference>
<dbReference type="GO" id="GO:0006354">
    <property type="term" value="P:DNA-templated transcription elongation"/>
    <property type="evidence" value="ECO:0007669"/>
    <property type="project" value="TreeGrafter"/>
</dbReference>
<dbReference type="GO" id="GO:0032784">
    <property type="term" value="P:regulation of DNA-templated transcription elongation"/>
    <property type="evidence" value="ECO:0007669"/>
    <property type="project" value="UniProtKB-UniRule"/>
</dbReference>
<dbReference type="FunFam" id="1.10.287.180:FF:000001">
    <property type="entry name" value="Transcription elongation factor GreA"/>
    <property type="match status" value="1"/>
</dbReference>
<dbReference type="FunFam" id="3.10.50.30:FF:000001">
    <property type="entry name" value="Transcription elongation factor GreA"/>
    <property type="match status" value="1"/>
</dbReference>
<dbReference type="Gene3D" id="3.10.50.30">
    <property type="entry name" value="Transcription elongation factor, GreA/GreB, C-terminal domain"/>
    <property type="match status" value="1"/>
</dbReference>
<dbReference type="Gene3D" id="1.10.287.180">
    <property type="entry name" value="Transcription elongation factor, GreA/GreB, N-terminal domain"/>
    <property type="match status" value="1"/>
</dbReference>
<dbReference type="HAMAP" id="MF_00105">
    <property type="entry name" value="GreA_GreB"/>
    <property type="match status" value="1"/>
</dbReference>
<dbReference type="InterPro" id="IPR036953">
    <property type="entry name" value="GreA/GreB_C_sf"/>
</dbReference>
<dbReference type="InterPro" id="IPR018151">
    <property type="entry name" value="TF_GreA/GreB_CS"/>
</dbReference>
<dbReference type="InterPro" id="IPR006359">
    <property type="entry name" value="Tscrpt_elong_fac_GreA"/>
</dbReference>
<dbReference type="InterPro" id="IPR028624">
    <property type="entry name" value="Tscrpt_elong_fac_GreA/B"/>
</dbReference>
<dbReference type="InterPro" id="IPR001437">
    <property type="entry name" value="Tscrpt_elong_fac_GreA/B_C"/>
</dbReference>
<dbReference type="InterPro" id="IPR023459">
    <property type="entry name" value="Tscrpt_elong_fac_GreA/B_fam"/>
</dbReference>
<dbReference type="InterPro" id="IPR022691">
    <property type="entry name" value="Tscrpt_elong_fac_GreA/B_N"/>
</dbReference>
<dbReference type="InterPro" id="IPR036805">
    <property type="entry name" value="Tscrpt_elong_fac_GreA/B_N_sf"/>
</dbReference>
<dbReference type="NCBIfam" id="TIGR01462">
    <property type="entry name" value="greA"/>
    <property type="match status" value="1"/>
</dbReference>
<dbReference type="NCBIfam" id="NF001261">
    <property type="entry name" value="PRK00226.1-2"/>
    <property type="match status" value="1"/>
</dbReference>
<dbReference type="NCBIfam" id="NF001263">
    <property type="entry name" value="PRK00226.1-4"/>
    <property type="match status" value="1"/>
</dbReference>
<dbReference type="PANTHER" id="PTHR30437">
    <property type="entry name" value="TRANSCRIPTION ELONGATION FACTOR GREA"/>
    <property type="match status" value="1"/>
</dbReference>
<dbReference type="PANTHER" id="PTHR30437:SF4">
    <property type="entry name" value="TRANSCRIPTION ELONGATION FACTOR GREA"/>
    <property type="match status" value="1"/>
</dbReference>
<dbReference type="Pfam" id="PF01272">
    <property type="entry name" value="GreA_GreB"/>
    <property type="match status" value="1"/>
</dbReference>
<dbReference type="Pfam" id="PF03449">
    <property type="entry name" value="GreA_GreB_N"/>
    <property type="match status" value="1"/>
</dbReference>
<dbReference type="PIRSF" id="PIRSF006092">
    <property type="entry name" value="GreA_GreB"/>
    <property type="match status" value="1"/>
</dbReference>
<dbReference type="SUPFAM" id="SSF54534">
    <property type="entry name" value="FKBP-like"/>
    <property type="match status" value="1"/>
</dbReference>
<dbReference type="SUPFAM" id="SSF46557">
    <property type="entry name" value="GreA transcript cleavage protein, N-terminal domain"/>
    <property type="match status" value="1"/>
</dbReference>
<dbReference type="PROSITE" id="PS00829">
    <property type="entry name" value="GREAB_1"/>
    <property type="match status" value="1"/>
</dbReference>
<dbReference type="PROSITE" id="PS00830">
    <property type="entry name" value="GREAB_2"/>
    <property type="match status" value="1"/>
</dbReference>
<name>GREA_CAMJR</name>
<keyword id="KW-0175">Coiled coil</keyword>
<keyword id="KW-0238">DNA-binding</keyword>
<keyword id="KW-0804">Transcription</keyword>
<keyword id="KW-0805">Transcription regulation</keyword>
<comment type="function">
    <text evidence="1">Necessary for efficient RNA polymerase transcription elongation past template-encoded arresting sites. The arresting sites in DNA have the property of trapping a certain fraction of elongating RNA polymerases that pass through, resulting in locked ternary complexes. Cleavage of the nascent transcript by cleavage factors such as GreA or GreB allows the resumption of elongation from the new 3'terminus. GreA releases sequences of 2 to 3 nucleotides.</text>
</comment>
<comment type="similarity">
    <text evidence="1">Belongs to the GreA/GreB family.</text>
</comment>
<feature type="chain" id="PRO_0000176916" description="Transcription elongation factor GreA">
    <location>
        <begin position="1"/>
        <end position="161"/>
    </location>
</feature>
<feature type="coiled-coil region" evidence="1">
    <location>
        <begin position="45"/>
        <end position="73"/>
    </location>
</feature>
<gene>
    <name evidence="1" type="primary">greA</name>
    <name type="ordered locus">CJE0335</name>
</gene>
<reference key="1">
    <citation type="journal article" date="2005" name="PLoS Biol.">
        <title>Major structural differences and novel potential virulence mechanisms from the genomes of multiple Campylobacter species.</title>
        <authorList>
            <person name="Fouts D.E."/>
            <person name="Mongodin E.F."/>
            <person name="Mandrell R.E."/>
            <person name="Miller W.G."/>
            <person name="Rasko D.A."/>
            <person name="Ravel J."/>
            <person name="Brinkac L.M."/>
            <person name="DeBoy R.T."/>
            <person name="Parker C.T."/>
            <person name="Daugherty S.C."/>
            <person name="Dodson R.J."/>
            <person name="Durkin A.S."/>
            <person name="Madupu R."/>
            <person name="Sullivan S.A."/>
            <person name="Shetty J.U."/>
            <person name="Ayodeji M.A."/>
            <person name="Shvartsbeyn A."/>
            <person name="Schatz M.C."/>
            <person name="Badger J.H."/>
            <person name="Fraser C.M."/>
            <person name="Nelson K.E."/>
        </authorList>
    </citation>
    <scope>NUCLEOTIDE SEQUENCE [LARGE SCALE GENOMIC DNA]</scope>
    <source>
        <strain>RM1221</strain>
    </source>
</reference>
<accession>Q5HWI0</accession>